<reference key="1">
    <citation type="submission" date="2007-11" db="EMBL/GenBank/DDBJ databases">
        <authorList>
            <consortium name="The Salmonella enterica serovar Arizonae Genome Sequencing Project"/>
            <person name="McClelland M."/>
            <person name="Sanderson E.K."/>
            <person name="Porwollik S."/>
            <person name="Spieth J."/>
            <person name="Clifton W.S."/>
            <person name="Fulton R."/>
            <person name="Chunyan W."/>
            <person name="Wollam A."/>
            <person name="Shah N."/>
            <person name="Pepin K."/>
            <person name="Bhonagiri V."/>
            <person name="Nash W."/>
            <person name="Johnson M."/>
            <person name="Thiruvilangam P."/>
            <person name="Wilson R."/>
        </authorList>
    </citation>
    <scope>NUCLEOTIDE SEQUENCE [LARGE SCALE GENOMIC DNA]</scope>
    <source>
        <strain>ATCC BAA-731 / CDC346-86 / RSK2980</strain>
    </source>
</reference>
<gene>
    <name evidence="1" type="primary">rplY</name>
    <name type="ordered locus">SARI_00663</name>
</gene>
<feature type="chain" id="PRO_1000086641" description="Large ribosomal subunit protein bL25">
    <location>
        <begin position="1"/>
        <end position="94"/>
    </location>
</feature>
<evidence type="ECO:0000255" key="1">
    <source>
        <dbReference type="HAMAP-Rule" id="MF_01336"/>
    </source>
</evidence>
<evidence type="ECO:0000305" key="2"/>
<name>RL25_SALAR</name>
<accession>A9MK27</accession>
<sequence length="94" mass="10539">MFTINAEVRKEQGKGASRRLRAANKFPAIIYGGSEAPIAIELDHDKVMNMQAKAEFYSEVLTLVVDGKEVKVKAQAVQRHAFKPKLTHIDFIRA</sequence>
<proteinExistence type="inferred from homology"/>
<keyword id="KW-1185">Reference proteome</keyword>
<keyword id="KW-0687">Ribonucleoprotein</keyword>
<keyword id="KW-0689">Ribosomal protein</keyword>
<keyword id="KW-0694">RNA-binding</keyword>
<keyword id="KW-0699">rRNA-binding</keyword>
<dbReference type="EMBL" id="CP000880">
    <property type="protein sequence ID" value="ABX20586.1"/>
    <property type="molecule type" value="Genomic_DNA"/>
</dbReference>
<dbReference type="SMR" id="A9MK27"/>
<dbReference type="STRING" id="41514.SARI_00663"/>
<dbReference type="KEGG" id="ses:SARI_00663"/>
<dbReference type="HOGENOM" id="CLU_137946_0_0_6"/>
<dbReference type="Proteomes" id="UP000002084">
    <property type="component" value="Chromosome"/>
</dbReference>
<dbReference type="GO" id="GO:0022625">
    <property type="term" value="C:cytosolic large ribosomal subunit"/>
    <property type="evidence" value="ECO:0007669"/>
    <property type="project" value="TreeGrafter"/>
</dbReference>
<dbReference type="GO" id="GO:0008097">
    <property type="term" value="F:5S rRNA binding"/>
    <property type="evidence" value="ECO:0007669"/>
    <property type="project" value="InterPro"/>
</dbReference>
<dbReference type="GO" id="GO:0003735">
    <property type="term" value="F:structural constituent of ribosome"/>
    <property type="evidence" value="ECO:0007669"/>
    <property type="project" value="InterPro"/>
</dbReference>
<dbReference type="GO" id="GO:0006412">
    <property type="term" value="P:translation"/>
    <property type="evidence" value="ECO:0007669"/>
    <property type="project" value="UniProtKB-UniRule"/>
</dbReference>
<dbReference type="CDD" id="cd00495">
    <property type="entry name" value="Ribosomal_L25_TL5_CTC"/>
    <property type="match status" value="1"/>
</dbReference>
<dbReference type="FunFam" id="2.40.240.10:FF:000002">
    <property type="entry name" value="50S ribosomal protein L25"/>
    <property type="match status" value="1"/>
</dbReference>
<dbReference type="Gene3D" id="2.40.240.10">
    <property type="entry name" value="Ribosomal Protein L25, Chain P"/>
    <property type="match status" value="1"/>
</dbReference>
<dbReference type="HAMAP" id="MF_01336">
    <property type="entry name" value="Ribosomal_bL25"/>
    <property type="match status" value="1"/>
</dbReference>
<dbReference type="InterPro" id="IPR020056">
    <property type="entry name" value="Rbsml_bL25/Gln-tRNA_synth_N"/>
</dbReference>
<dbReference type="InterPro" id="IPR011035">
    <property type="entry name" value="Ribosomal_bL25/Gln-tRNA_synth"/>
</dbReference>
<dbReference type="InterPro" id="IPR020055">
    <property type="entry name" value="Ribosomal_bL25_short"/>
</dbReference>
<dbReference type="InterPro" id="IPR029751">
    <property type="entry name" value="Ribosomal_L25_dom"/>
</dbReference>
<dbReference type="InterPro" id="IPR020930">
    <property type="entry name" value="Ribosomal_uL5_bac-type"/>
</dbReference>
<dbReference type="NCBIfam" id="NF004612">
    <property type="entry name" value="PRK05943.1"/>
    <property type="match status" value="1"/>
</dbReference>
<dbReference type="PANTHER" id="PTHR33284">
    <property type="entry name" value="RIBOSOMAL PROTEIN L25/GLN-TRNA SYNTHETASE, ANTI-CODON-BINDING DOMAIN-CONTAINING PROTEIN"/>
    <property type="match status" value="1"/>
</dbReference>
<dbReference type="PANTHER" id="PTHR33284:SF1">
    <property type="entry name" value="RIBOSOMAL PROTEIN L25_GLN-TRNA SYNTHETASE, ANTI-CODON-BINDING DOMAIN-CONTAINING PROTEIN"/>
    <property type="match status" value="1"/>
</dbReference>
<dbReference type="Pfam" id="PF01386">
    <property type="entry name" value="Ribosomal_L25p"/>
    <property type="match status" value="1"/>
</dbReference>
<dbReference type="SUPFAM" id="SSF50715">
    <property type="entry name" value="Ribosomal protein L25-like"/>
    <property type="match status" value="1"/>
</dbReference>
<protein>
    <recommendedName>
        <fullName evidence="1">Large ribosomal subunit protein bL25</fullName>
    </recommendedName>
    <alternativeName>
        <fullName evidence="2">50S ribosomal protein L25</fullName>
    </alternativeName>
</protein>
<organism>
    <name type="scientific">Salmonella arizonae (strain ATCC BAA-731 / CDC346-86 / RSK2980)</name>
    <dbReference type="NCBI Taxonomy" id="41514"/>
    <lineage>
        <taxon>Bacteria</taxon>
        <taxon>Pseudomonadati</taxon>
        <taxon>Pseudomonadota</taxon>
        <taxon>Gammaproteobacteria</taxon>
        <taxon>Enterobacterales</taxon>
        <taxon>Enterobacteriaceae</taxon>
        <taxon>Salmonella</taxon>
    </lineage>
</organism>
<comment type="function">
    <text evidence="1">This is one of the proteins that binds to the 5S RNA in the ribosome where it forms part of the central protuberance.</text>
</comment>
<comment type="subunit">
    <text evidence="1">Part of the 50S ribosomal subunit; part of the 5S rRNA/L5/L18/L25 subcomplex. Contacts the 5S rRNA. Binds to the 5S rRNA independently of L5 and L18.</text>
</comment>
<comment type="similarity">
    <text evidence="1">Belongs to the bacterial ribosomal protein bL25 family.</text>
</comment>